<sequence>KSAVTRNYSEKKNERLWFKKNYDHAGNQRRIQKWNTQLK</sequence>
<dbReference type="SMR" id="P68353"/>
<dbReference type="IntAct" id="P68353">
    <property type="interactions" value="5"/>
</dbReference>
<dbReference type="GO" id="GO:0008180">
    <property type="term" value="C:COP9 signalosome"/>
    <property type="evidence" value="ECO:0007669"/>
    <property type="project" value="UniProtKB-KW"/>
</dbReference>
<dbReference type="GO" id="GO:0005737">
    <property type="term" value="C:cytoplasm"/>
    <property type="evidence" value="ECO:0007669"/>
    <property type="project" value="UniProtKB-SubCell"/>
</dbReference>
<dbReference type="GO" id="GO:0009585">
    <property type="term" value="P:red, far-red light phototransduction"/>
    <property type="evidence" value="ECO:0007669"/>
    <property type="project" value="UniProtKB-KW"/>
</dbReference>
<feature type="chain" id="PRO_0000120976" description="COP9 signalosome complex subunit 2">
    <location>
        <begin position="1" status="less than"/>
        <end position="39" status="greater than"/>
    </location>
</feature>
<feature type="non-consecutive residues" evidence="2">
    <location>
        <begin position="11"/>
        <end position="12"/>
    </location>
</feature>
<feature type="non-consecutive residues" evidence="2">
    <location>
        <begin position="19"/>
        <end position="20"/>
    </location>
</feature>
<feature type="non-consecutive residues" evidence="2">
    <location>
        <begin position="32"/>
        <end position="33"/>
    </location>
</feature>
<feature type="non-terminal residue">
    <location>
        <position position="1"/>
    </location>
</feature>
<feature type="non-terminal residue">
    <location>
        <position position="39"/>
    </location>
</feature>
<name>CSN2_BRAOL</name>
<protein>
    <recommendedName>
        <fullName>COP9 signalosome complex subunit 2</fullName>
        <shortName>Signalosome subunit 2</shortName>
    </recommendedName>
    <alternativeName>
        <fullName>FUSCA protein 12</fullName>
        <shortName>FUSCA12</shortName>
    </alternativeName>
</protein>
<evidence type="ECO:0000250" key="1"/>
<evidence type="ECO:0000305" key="2"/>
<accession>P68353</accession>
<keyword id="KW-0963">Cytoplasm</keyword>
<keyword id="KW-0217">Developmental protein</keyword>
<keyword id="KW-0903">Direct protein sequencing</keyword>
<keyword id="KW-0539">Nucleus</keyword>
<keyword id="KW-0607">Phytochrome signaling pathway</keyword>
<keyword id="KW-0736">Signalosome</keyword>
<comment type="function">
    <text evidence="1">Component of the COP9 signalosome complex (CSN), a complex involved in various cellular and developmental processes such as photomorphogenesis and auxin and jasmonate responses. The CSN complex is an essential regulator of the ubiquitin (Ubl) conjugation pathway by mediating the deneddylation of the cullin subunits of SCF-type E3 ligase complexes, leading to decrease the Ubl ligase activity of SCF. It is involved in repression of photomorphogenesis in darkness by regulating the activity of COP1-containing Ubl ligase complexes (By similarity).</text>
</comment>
<comment type="subunit">
    <text>Component of the CSN complex, probably composed of CSN1, CSN2, CSN3, CSN4, CSN5 (CSN5A or CSN5B), CSN6 (CSN6A or CSN6B), CSN7 and CSN8.</text>
</comment>
<comment type="interaction">
    <interactant intactId="EBI-530927">
        <id>P68353</id>
    </interactant>
    <interactant intactId="EBI-530932">
        <id>P68359</id>
        <label>CSN4</label>
    </interactant>
    <organismsDiffer>false</organismsDiffer>
    <experiments>2</experiments>
</comment>
<comment type="subcellular location">
    <subcellularLocation>
        <location>Cytoplasm</location>
    </subcellularLocation>
    <subcellularLocation>
        <location>Nucleus</location>
    </subcellularLocation>
</comment>
<comment type="similarity">
    <text evidence="2">Belongs to the CSN2 family.</text>
</comment>
<reference key="1">
    <citation type="journal article" date="1999" name="Plant Cell">
        <title>Arabidopsis cop8 and fus4 mutations define the same gene that encodes subunit 4 of the COP9 signalosome.</title>
        <authorList>
            <person name="Serino G."/>
            <person name="Tsuge T."/>
            <person name="Kwok S."/>
            <person name="Matsui M."/>
            <person name="Wei N."/>
            <person name="Deng X.-W."/>
        </authorList>
    </citation>
    <scope>PROTEIN SEQUENCE OF 1-19 AND 33-39</scope>
    <scope>COMPONENT OF THE CSN COMPLEX WITH CSN1; CSN3; CSN4; CSN5; CSN6; CSN7 AND CSN8</scope>
</reference>
<reference key="2">
    <citation type="journal article" date="2003" name="Plant Cell">
        <title>Characterization of the last subunit of the Arabidopsis COP9 signalosome: implications for the overall structure and origin of the complex.</title>
        <authorList>
            <person name="Serino G."/>
            <person name="Su H."/>
            <person name="Peng Z."/>
            <person name="Tsuge T."/>
            <person name="Wei N."/>
            <person name="Gu H."/>
            <person name="Deng X.-W."/>
        </authorList>
    </citation>
    <scope>PROTEIN SEQUENCE OF 20-32</scope>
</reference>
<organism>
    <name type="scientific">Brassica oleracea</name>
    <name type="common">Wild cabbage</name>
    <dbReference type="NCBI Taxonomy" id="3712"/>
    <lineage>
        <taxon>Eukaryota</taxon>
        <taxon>Viridiplantae</taxon>
        <taxon>Streptophyta</taxon>
        <taxon>Embryophyta</taxon>
        <taxon>Tracheophyta</taxon>
        <taxon>Spermatophyta</taxon>
        <taxon>Magnoliopsida</taxon>
        <taxon>eudicotyledons</taxon>
        <taxon>Gunneridae</taxon>
        <taxon>Pentapetalae</taxon>
        <taxon>rosids</taxon>
        <taxon>malvids</taxon>
        <taxon>Brassicales</taxon>
        <taxon>Brassicaceae</taxon>
        <taxon>Brassiceae</taxon>
        <taxon>Brassica</taxon>
    </lineage>
</organism>
<gene>
    <name type="primary">CSN2</name>
    <name type="synonym">FUS12</name>
</gene>
<proteinExistence type="evidence at protein level"/>